<protein>
    <recommendedName>
        <fullName evidence="1">Phosphatidylglycerol--prolipoprotein diacylglyceryl transferase</fullName>
        <ecNumber evidence="1">2.5.1.145</ecNumber>
    </recommendedName>
</protein>
<evidence type="ECO:0000255" key="1">
    <source>
        <dbReference type="HAMAP-Rule" id="MF_01147"/>
    </source>
</evidence>
<organism>
    <name type="scientific">Escherichia coli (strain 55989 / EAEC)</name>
    <dbReference type="NCBI Taxonomy" id="585055"/>
    <lineage>
        <taxon>Bacteria</taxon>
        <taxon>Pseudomonadati</taxon>
        <taxon>Pseudomonadota</taxon>
        <taxon>Gammaproteobacteria</taxon>
        <taxon>Enterobacterales</taxon>
        <taxon>Enterobacteriaceae</taxon>
        <taxon>Escherichia</taxon>
    </lineage>
</organism>
<keyword id="KW-0997">Cell inner membrane</keyword>
<keyword id="KW-1003">Cell membrane</keyword>
<keyword id="KW-0472">Membrane</keyword>
<keyword id="KW-1185">Reference proteome</keyword>
<keyword id="KW-0808">Transferase</keyword>
<keyword id="KW-0812">Transmembrane</keyword>
<keyword id="KW-1133">Transmembrane helix</keyword>
<reference key="1">
    <citation type="journal article" date="2009" name="PLoS Genet.">
        <title>Organised genome dynamics in the Escherichia coli species results in highly diverse adaptive paths.</title>
        <authorList>
            <person name="Touchon M."/>
            <person name="Hoede C."/>
            <person name="Tenaillon O."/>
            <person name="Barbe V."/>
            <person name="Baeriswyl S."/>
            <person name="Bidet P."/>
            <person name="Bingen E."/>
            <person name="Bonacorsi S."/>
            <person name="Bouchier C."/>
            <person name="Bouvet O."/>
            <person name="Calteau A."/>
            <person name="Chiapello H."/>
            <person name="Clermont O."/>
            <person name="Cruveiller S."/>
            <person name="Danchin A."/>
            <person name="Diard M."/>
            <person name="Dossat C."/>
            <person name="Karoui M.E."/>
            <person name="Frapy E."/>
            <person name="Garry L."/>
            <person name="Ghigo J.M."/>
            <person name="Gilles A.M."/>
            <person name="Johnson J."/>
            <person name="Le Bouguenec C."/>
            <person name="Lescat M."/>
            <person name="Mangenot S."/>
            <person name="Martinez-Jehanne V."/>
            <person name="Matic I."/>
            <person name="Nassif X."/>
            <person name="Oztas S."/>
            <person name="Petit M.A."/>
            <person name="Pichon C."/>
            <person name="Rouy Z."/>
            <person name="Ruf C.S."/>
            <person name="Schneider D."/>
            <person name="Tourret J."/>
            <person name="Vacherie B."/>
            <person name="Vallenet D."/>
            <person name="Medigue C."/>
            <person name="Rocha E.P.C."/>
            <person name="Denamur E."/>
        </authorList>
    </citation>
    <scope>NUCLEOTIDE SEQUENCE [LARGE SCALE GENOMIC DNA]</scope>
    <source>
        <strain>55989 / EAEC</strain>
    </source>
</reference>
<feature type="chain" id="PRO_1000164137" description="Phosphatidylglycerol--prolipoprotein diacylglyceryl transferase">
    <location>
        <begin position="1"/>
        <end position="291"/>
    </location>
</feature>
<feature type="transmembrane region" description="Helical" evidence="1">
    <location>
        <begin position="21"/>
        <end position="41"/>
    </location>
</feature>
<feature type="transmembrane region" description="Helical" evidence="1">
    <location>
        <begin position="60"/>
        <end position="80"/>
    </location>
</feature>
<feature type="transmembrane region" description="Helical" evidence="1">
    <location>
        <begin position="96"/>
        <end position="116"/>
    </location>
</feature>
<feature type="transmembrane region" description="Helical" evidence="1">
    <location>
        <begin position="225"/>
        <end position="245"/>
    </location>
</feature>
<feature type="transmembrane region" description="Helical" evidence="1">
    <location>
        <begin position="260"/>
        <end position="280"/>
    </location>
</feature>
<feature type="binding site" evidence="1">
    <location>
        <position position="143"/>
    </location>
    <ligand>
        <name>a 1,2-diacyl-sn-glycero-3-phospho-(1'-sn-glycerol)</name>
        <dbReference type="ChEBI" id="CHEBI:64716"/>
    </ligand>
</feature>
<comment type="function">
    <text evidence="1">Catalyzes the transfer of the diacylglyceryl group from phosphatidylglycerol to the sulfhydryl group of the N-terminal cysteine of a prolipoprotein, the first step in the formation of mature lipoproteins.</text>
</comment>
<comment type="catalytic activity">
    <reaction evidence="1">
        <text>L-cysteinyl-[prolipoprotein] + a 1,2-diacyl-sn-glycero-3-phospho-(1'-sn-glycerol) = an S-1,2-diacyl-sn-glyceryl-L-cysteinyl-[prolipoprotein] + sn-glycerol 1-phosphate + H(+)</text>
        <dbReference type="Rhea" id="RHEA:56712"/>
        <dbReference type="Rhea" id="RHEA-COMP:14679"/>
        <dbReference type="Rhea" id="RHEA-COMP:14680"/>
        <dbReference type="ChEBI" id="CHEBI:15378"/>
        <dbReference type="ChEBI" id="CHEBI:29950"/>
        <dbReference type="ChEBI" id="CHEBI:57685"/>
        <dbReference type="ChEBI" id="CHEBI:64716"/>
        <dbReference type="ChEBI" id="CHEBI:140658"/>
        <dbReference type="EC" id="2.5.1.145"/>
    </reaction>
</comment>
<comment type="pathway">
    <text evidence="1">Protein modification; lipoprotein biosynthesis (diacylglyceryl transfer).</text>
</comment>
<comment type="subcellular location">
    <subcellularLocation>
        <location evidence="1">Cell inner membrane</location>
        <topology evidence="1">Multi-pass membrane protein</topology>
    </subcellularLocation>
</comment>
<comment type="similarity">
    <text evidence="1">Belongs to the Lgt family.</text>
</comment>
<name>LGT_ECO55</name>
<accession>B7LF05</accession>
<proteinExistence type="inferred from homology"/>
<gene>
    <name evidence="1" type="primary">lgt</name>
    <name type="ordered locus">EC55989_3104</name>
</gene>
<sequence length="291" mass="33108">MTSSYLHFPEFDPVIFSIGPVALHWYGLMYLVGFIFAMWLATRRANRPGSGWTKNEVENLLYAGFLGVFLGGRIGYVLFYNFPQFMADPLYLFRVWDGGMSFHGGLIGVIVVMIIFARRTKRSFFQVSDFIAPLIPFGLGAGRLGNFINGELWGRVDPNFPFAMLFPGSRTEDILLLQTNPQWQSIFDTYGVLPRHPSQLYELLLEGVVLFIILNLYIRKPRPMGAVSGLFLIGYGAFRIIVEFFRQPDAQFTGAWVQYISMGQILSIPMIVAGVIMMVWAYRRSPQQHVS</sequence>
<dbReference type="EC" id="2.5.1.145" evidence="1"/>
<dbReference type="EMBL" id="CU928145">
    <property type="protein sequence ID" value="CAU99015.1"/>
    <property type="molecule type" value="Genomic_DNA"/>
</dbReference>
<dbReference type="RefSeq" id="WP_000204658.1">
    <property type="nucleotide sequence ID" value="NZ_CP028304.1"/>
</dbReference>
<dbReference type="SMR" id="B7LF05"/>
<dbReference type="GeneID" id="93779170"/>
<dbReference type="KEGG" id="eck:EC55989_3104"/>
<dbReference type="HOGENOM" id="CLU_013386_1_0_6"/>
<dbReference type="UniPathway" id="UPA00664"/>
<dbReference type="Proteomes" id="UP000000746">
    <property type="component" value="Chromosome"/>
</dbReference>
<dbReference type="GO" id="GO:0005886">
    <property type="term" value="C:plasma membrane"/>
    <property type="evidence" value="ECO:0007669"/>
    <property type="project" value="UniProtKB-SubCell"/>
</dbReference>
<dbReference type="GO" id="GO:0008961">
    <property type="term" value="F:phosphatidylglycerol-prolipoprotein diacylglyceryl transferase activity"/>
    <property type="evidence" value="ECO:0007669"/>
    <property type="project" value="UniProtKB-UniRule"/>
</dbReference>
<dbReference type="GO" id="GO:0042158">
    <property type="term" value="P:lipoprotein biosynthetic process"/>
    <property type="evidence" value="ECO:0007669"/>
    <property type="project" value="UniProtKB-UniRule"/>
</dbReference>
<dbReference type="HAMAP" id="MF_01147">
    <property type="entry name" value="Lgt"/>
    <property type="match status" value="1"/>
</dbReference>
<dbReference type="InterPro" id="IPR001640">
    <property type="entry name" value="Lgt"/>
</dbReference>
<dbReference type="NCBIfam" id="TIGR00544">
    <property type="entry name" value="lgt"/>
    <property type="match status" value="1"/>
</dbReference>
<dbReference type="PANTHER" id="PTHR30589:SF0">
    <property type="entry name" value="PHOSPHATIDYLGLYCEROL--PROLIPOPROTEIN DIACYLGLYCERYL TRANSFERASE"/>
    <property type="match status" value="1"/>
</dbReference>
<dbReference type="PANTHER" id="PTHR30589">
    <property type="entry name" value="PROLIPOPROTEIN DIACYLGLYCERYL TRANSFERASE"/>
    <property type="match status" value="1"/>
</dbReference>
<dbReference type="Pfam" id="PF01790">
    <property type="entry name" value="LGT"/>
    <property type="match status" value="1"/>
</dbReference>
<dbReference type="PROSITE" id="PS01311">
    <property type="entry name" value="LGT"/>
    <property type="match status" value="1"/>
</dbReference>